<dbReference type="EC" id="7.4.2.8" evidence="1"/>
<dbReference type="EMBL" id="BX571857">
    <property type="protein sequence ID" value="CAG44352.1"/>
    <property type="molecule type" value="Genomic_DNA"/>
</dbReference>
<dbReference type="RefSeq" id="WP_000680932.1">
    <property type="nucleotide sequence ID" value="NC_002953.3"/>
</dbReference>
<dbReference type="SMR" id="Q6G625"/>
<dbReference type="KEGG" id="sas:SAS2535"/>
<dbReference type="HOGENOM" id="CLU_005314_3_2_9"/>
<dbReference type="GO" id="GO:0031522">
    <property type="term" value="C:cell envelope Sec protein transport complex"/>
    <property type="evidence" value="ECO:0007669"/>
    <property type="project" value="TreeGrafter"/>
</dbReference>
<dbReference type="GO" id="GO:0005829">
    <property type="term" value="C:cytosol"/>
    <property type="evidence" value="ECO:0007669"/>
    <property type="project" value="TreeGrafter"/>
</dbReference>
<dbReference type="GO" id="GO:0005886">
    <property type="term" value="C:plasma membrane"/>
    <property type="evidence" value="ECO:0007669"/>
    <property type="project" value="UniProtKB-SubCell"/>
</dbReference>
<dbReference type="GO" id="GO:0005524">
    <property type="term" value="F:ATP binding"/>
    <property type="evidence" value="ECO:0007669"/>
    <property type="project" value="UniProtKB-UniRule"/>
</dbReference>
<dbReference type="GO" id="GO:0008564">
    <property type="term" value="F:protein-exporting ATPase activity"/>
    <property type="evidence" value="ECO:0007669"/>
    <property type="project" value="UniProtKB-EC"/>
</dbReference>
<dbReference type="GO" id="GO:0065002">
    <property type="term" value="P:intracellular protein transmembrane transport"/>
    <property type="evidence" value="ECO:0007669"/>
    <property type="project" value="UniProtKB-UniRule"/>
</dbReference>
<dbReference type="GO" id="GO:0017038">
    <property type="term" value="P:protein import"/>
    <property type="evidence" value="ECO:0007669"/>
    <property type="project" value="InterPro"/>
</dbReference>
<dbReference type="GO" id="GO:0006605">
    <property type="term" value="P:protein targeting"/>
    <property type="evidence" value="ECO:0007669"/>
    <property type="project" value="UniProtKB-UniRule"/>
</dbReference>
<dbReference type="GO" id="GO:0043952">
    <property type="term" value="P:protein transport by the Sec complex"/>
    <property type="evidence" value="ECO:0007669"/>
    <property type="project" value="TreeGrafter"/>
</dbReference>
<dbReference type="CDD" id="cd17928">
    <property type="entry name" value="DEXDc_SecA"/>
    <property type="match status" value="1"/>
</dbReference>
<dbReference type="CDD" id="cd18803">
    <property type="entry name" value="SF2_C_secA"/>
    <property type="match status" value="1"/>
</dbReference>
<dbReference type="FunFam" id="3.40.50.300:FF:000429">
    <property type="entry name" value="Preprotein translocase subunit SecA"/>
    <property type="match status" value="1"/>
</dbReference>
<dbReference type="FunFam" id="3.40.50.300:FF:001575">
    <property type="entry name" value="Protein translocase subunit SecA 2"/>
    <property type="match status" value="1"/>
</dbReference>
<dbReference type="Gene3D" id="1.10.3060.10">
    <property type="entry name" value="Helical scaffold and wing domains of SecA"/>
    <property type="match status" value="1"/>
</dbReference>
<dbReference type="Gene3D" id="3.40.50.300">
    <property type="entry name" value="P-loop containing nucleotide triphosphate hydrolases"/>
    <property type="match status" value="2"/>
</dbReference>
<dbReference type="Gene3D" id="3.90.1440.10">
    <property type="entry name" value="SecA, preprotein cross-linking domain"/>
    <property type="match status" value="1"/>
</dbReference>
<dbReference type="HAMAP" id="MF_01382">
    <property type="entry name" value="SecA"/>
    <property type="match status" value="1"/>
</dbReference>
<dbReference type="InterPro" id="IPR014001">
    <property type="entry name" value="Helicase_ATP-bd"/>
</dbReference>
<dbReference type="InterPro" id="IPR001650">
    <property type="entry name" value="Helicase_C-like"/>
</dbReference>
<dbReference type="InterPro" id="IPR027417">
    <property type="entry name" value="P-loop_NTPase"/>
</dbReference>
<dbReference type="InterPro" id="IPR000185">
    <property type="entry name" value="SecA"/>
</dbReference>
<dbReference type="InterPro" id="IPR022490">
    <property type="entry name" value="SecA2"/>
</dbReference>
<dbReference type="InterPro" id="IPR011115">
    <property type="entry name" value="SecA_DEAD"/>
</dbReference>
<dbReference type="InterPro" id="IPR014018">
    <property type="entry name" value="SecA_motor_DEAD"/>
</dbReference>
<dbReference type="InterPro" id="IPR011130">
    <property type="entry name" value="SecA_preprotein_X-link_dom"/>
</dbReference>
<dbReference type="InterPro" id="IPR044722">
    <property type="entry name" value="SecA_SF2_C"/>
</dbReference>
<dbReference type="InterPro" id="IPR011116">
    <property type="entry name" value="SecA_Wing/Scaffold"/>
</dbReference>
<dbReference type="InterPro" id="IPR036266">
    <property type="entry name" value="SecA_Wing/Scaffold_sf"/>
</dbReference>
<dbReference type="InterPro" id="IPR036670">
    <property type="entry name" value="SecA_X-link_sf"/>
</dbReference>
<dbReference type="NCBIfam" id="NF006630">
    <property type="entry name" value="PRK09200.1"/>
    <property type="match status" value="1"/>
</dbReference>
<dbReference type="NCBIfam" id="TIGR03714">
    <property type="entry name" value="secA2"/>
    <property type="match status" value="1"/>
</dbReference>
<dbReference type="PANTHER" id="PTHR30612:SF0">
    <property type="entry name" value="CHLOROPLAST PROTEIN-TRANSPORTING ATPASE"/>
    <property type="match status" value="1"/>
</dbReference>
<dbReference type="PANTHER" id="PTHR30612">
    <property type="entry name" value="SECA INNER MEMBRANE COMPONENT OF SEC PROTEIN SECRETION SYSTEM"/>
    <property type="match status" value="1"/>
</dbReference>
<dbReference type="Pfam" id="PF21090">
    <property type="entry name" value="P-loop_SecA"/>
    <property type="match status" value="1"/>
</dbReference>
<dbReference type="Pfam" id="PF07517">
    <property type="entry name" value="SecA_DEAD"/>
    <property type="match status" value="1"/>
</dbReference>
<dbReference type="Pfam" id="PF01043">
    <property type="entry name" value="SecA_PP_bind"/>
    <property type="match status" value="1"/>
</dbReference>
<dbReference type="Pfam" id="PF07516">
    <property type="entry name" value="SecA_SW"/>
    <property type="match status" value="1"/>
</dbReference>
<dbReference type="PRINTS" id="PR00906">
    <property type="entry name" value="SECA"/>
</dbReference>
<dbReference type="SMART" id="SM00957">
    <property type="entry name" value="SecA_DEAD"/>
    <property type="match status" value="1"/>
</dbReference>
<dbReference type="SMART" id="SM00958">
    <property type="entry name" value="SecA_PP_bind"/>
    <property type="match status" value="1"/>
</dbReference>
<dbReference type="SUPFAM" id="SSF81886">
    <property type="entry name" value="Helical scaffold and wing domains of SecA"/>
    <property type="match status" value="1"/>
</dbReference>
<dbReference type="SUPFAM" id="SSF52540">
    <property type="entry name" value="P-loop containing nucleoside triphosphate hydrolases"/>
    <property type="match status" value="2"/>
</dbReference>
<dbReference type="SUPFAM" id="SSF81767">
    <property type="entry name" value="Pre-protein crosslinking domain of SecA"/>
    <property type="match status" value="1"/>
</dbReference>
<dbReference type="PROSITE" id="PS51196">
    <property type="entry name" value="SECA_MOTOR_DEAD"/>
    <property type="match status" value="1"/>
</dbReference>
<proteinExistence type="inferred from homology"/>
<gene>
    <name evidence="1" type="primary">secA2</name>
    <name type="ordered locus">SAS2535</name>
</gene>
<sequence length="796" mass="90900">MKHKLDVTINELRLKSIRKIVKRINTWGDEVKSYSDDALKQKTIEFKERLASGVDTLDTLLPEAYAVAREASWRVLGMYPKEVQLIGAIVLHEGNIAEMQTGEGKTLTATMPLYLNALSGKGTYLITTNDYLAKRDFEEMQPLYEWLGLTASLGFVDIVDYEYQKGEKRNLYEHDIIYTTNGRLGFDYLIDNLADSAEGKFLPQLNYGIIDEVDSIILDAAQTPLVISGAPRLQSNLFHIVKEFVDTLIEDVHFKMKKTKKEIWLLNQGIEAAQSYFNVEDLYSEQAMVLVRNINLALRAQYLFESNVDYFVYNGDIVLIDRITGRMLPGTKLQAGLHQAIEAKEGMEVSTDKSVMATITFQNLFKLFESFSGMTATGKLGESEFFDLYSKIVVQVPTDKAIQRIDEPDKVFRSVDEKNIAMIHDIVELHETGRPVLLITRTAEAAEYFSKVLFQMDIPNNLLIAQNVAKEAQMIAEAGQIGSMTVATSMAGRGTDIKLGEGVEALGGLAVIIHEHMENSRVDRQLRGRSGRQGDPGSSCIYISLDDYLVKRWSDSNLAENNQLYSLDAQRLSQSNLFNRKVKQIVVKAQRISEEQGVKAREMANEFEKSISIQRDLVYEERNRVLEIDDAENQDFKALAKDVFEMFVNEEKVLTKSRVVEYIYQNLSFQFNKDVACVNFKDKQAVVTFLLEQFEKQLALNRKNMQSAYYYNIFVQKVFLKAIDSCWLEQVDYLQQLKASVNQRQNGQRNAIFEYHRVALDSFEVMTRNIKKRMVKNICQSMITFDKEGMPVIHFP</sequence>
<reference key="1">
    <citation type="journal article" date="2004" name="Proc. Natl. Acad. Sci. U.S.A.">
        <title>Complete genomes of two clinical Staphylococcus aureus strains: evidence for the rapid evolution of virulence and drug resistance.</title>
        <authorList>
            <person name="Holden M.T.G."/>
            <person name="Feil E.J."/>
            <person name="Lindsay J.A."/>
            <person name="Peacock S.J."/>
            <person name="Day N.P.J."/>
            <person name="Enright M.C."/>
            <person name="Foster T.J."/>
            <person name="Moore C.E."/>
            <person name="Hurst L."/>
            <person name="Atkin R."/>
            <person name="Barron A."/>
            <person name="Bason N."/>
            <person name="Bentley S.D."/>
            <person name="Chillingworth C."/>
            <person name="Chillingworth T."/>
            <person name="Churcher C."/>
            <person name="Clark L."/>
            <person name="Corton C."/>
            <person name="Cronin A."/>
            <person name="Doggett J."/>
            <person name="Dowd L."/>
            <person name="Feltwell T."/>
            <person name="Hance Z."/>
            <person name="Harris B."/>
            <person name="Hauser H."/>
            <person name="Holroyd S."/>
            <person name="Jagels K."/>
            <person name="James K.D."/>
            <person name="Lennard N."/>
            <person name="Line A."/>
            <person name="Mayes R."/>
            <person name="Moule S."/>
            <person name="Mungall K."/>
            <person name="Ormond D."/>
            <person name="Quail M.A."/>
            <person name="Rabbinowitsch E."/>
            <person name="Rutherford K.M."/>
            <person name="Sanders M."/>
            <person name="Sharp S."/>
            <person name="Simmonds M."/>
            <person name="Stevens K."/>
            <person name="Whitehead S."/>
            <person name="Barrell B.G."/>
            <person name="Spratt B.G."/>
            <person name="Parkhill J."/>
        </authorList>
    </citation>
    <scope>NUCLEOTIDE SEQUENCE [LARGE SCALE GENOMIC DNA]</scope>
    <source>
        <strain>MSSA476</strain>
    </source>
</reference>
<keyword id="KW-0067">ATP-binding</keyword>
<keyword id="KW-1003">Cell membrane</keyword>
<keyword id="KW-0963">Cytoplasm</keyword>
<keyword id="KW-0472">Membrane</keyword>
<keyword id="KW-0547">Nucleotide-binding</keyword>
<keyword id="KW-0653">Protein transport</keyword>
<keyword id="KW-1278">Translocase</keyword>
<keyword id="KW-0811">Translocation</keyword>
<keyword id="KW-0813">Transport</keyword>
<feature type="chain" id="PRO_0000318425" description="Protein translocase subunit SecA 2">
    <location>
        <begin position="1"/>
        <end position="796"/>
    </location>
</feature>
<feature type="binding site" evidence="1">
    <location>
        <position position="84"/>
    </location>
    <ligand>
        <name>ATP</name>
        <dbReference type="ChEBI" id="CHEBI:30616"/>
    </ligand>
</feature>
<feature type="binding site" evidence="1">
    <location>
        <begin position="102"/>
        <end position="106"/>
    </location>
    <ligand>
        <name>ATP</name>
        <dbReference type="ChEBI" id="CHEBI:30616"/>
    </ligand>
</feature>
<feature type="binding site" evidence="1">
    <location>
        <position position="496"/>
    </location>
    <ligand>
        <name>ATP</name>
        <dbReference type="ChEBI" id="CHEBI:30616"/>
    </ligand>
</feature>
<comment type="function">
    <text evidence="1">Part of the Sec protein translocase complex. Interacts with the SecYEG preprotein conducting channel. Has a central role in coupling the hydrolysis of ATP to the transfer of proteins into and across the cell membrane, serving as an ATP-driven molecular motor driving the stepwise translocation of polypeptide chains across the membrane.</text>
</comment>
<comment type="catalytic activity">
    <reaction evidence="1">
        <text>ATP + H2O + cellular proteinSide 1 = ADP + phosphate + cellular proteinSide 2.</text>
        <dbReference type="EC" id="7.4.2.8"/>
    </reaction>
</comment>
<comment type="subunit">
    <text evidence="1">Monomer and homodimer. Part of the essential Sec protein translocation apparatus which comprises SecA, SecYEG and auxiliary proteins SecDF. Other proteins may also be involved.</text>
</comment>
<comment type="subcellular location">
    <subcellularLocation>
        <location evidence="1">Cell membrane</location>
        <topology evidence="1">Peripheral membrane protein</topology>
        <orientation evidence="1">Cytoplasmic side</orientation>
    </subcellularLocation>
    <subcellularLocation>
        <location evidence="1">Cytoplasm</location>
    </subcellularLocation>
    <text evidence="1">Distribution is 50-50.</text>
</comment>
<comment type="similarity">
    <text evidence="1">Belongs to the SecA family.</text>
</comment>
<evidence type="ECO:0000255" key="1">
    <source>
        <dbReference type="HAMAP-Rule" id="MF_01382"/>
    </source>
</evidence>
<protein>
    <recommendedName>
        <fullName evidence="1">Protein translocase subunit SecA 2</fullName>
        <ecNumber evidence="1">7.4.2.8</ecNumber>
    </recommendedName>
</protein>
<name>SECA2_STAAS</name>
<organism>
    <name type="scientific">Staphylococcus aureus (strain MSSA476)</name>
    <dbReference type="NCBI Taxonomy" id="282459"/>
    <lineage>
        <taxon>Bacteria</taxon>
        <taxon>Bacillati</taxon>
        <taxon>Bacillota</taxon>
        <taxon>Bacilli</taxon>
        <taxon>Bacillales</taxon>
        <taxon>Staphylococcaceae</taxon>
        <taxon>Staphylococcus</taxon>
    </lineage>
</organism>
<accession>Q6G625</accession>